<sequence length="224" mass="25623">MMRVLVVEDNALLRHHLKVQLQDSGHQVDAAEDAREADYYLNEHLPDIAIVDLGLPDEDGLSLIRRWRSSDVSLPVLVLTAREGWQDKVEVLSSGADDYVTKPFHIEEVMARMQALMRRNSGLASQVINISPFQVDLSRRELSVNEEVIKLTAFEYTIMETLIRNNGKVVSKDSLMLQLYPDAELRESHTIDVLMGRLRKKIQAQYPHDVITTVRGQGYLFELR</sequence>
<proteinExistence type="inferred from homology"/>
<dbReference type="EMBL" id="AL513382">
    <property type="protein sequence ID" value="CAD08355.1"/>
    <property type="molecule type" value="Genomic_DNA"/>
</dbReference>
<dbReference type="EMBL" id="AE014613">
    <property type="protein sequence ID" value="AAO69314.1"/>
    <property type="molecule type" value="Genomic_DNA"/>
</dbReference>
<dbReference type="RefSeq" id="NP_455723.1">
    <property type="nucleotide sequence ID" value="NC_003198.1"/>
</dbReference>
<dbReference type="SMR" id="Q8Z7H2"/>
<dbReference type="STRING" id="220341.gene:17585235"/>
<dbReference type="KEGG" id="stt:t1689"/>
<dbReference type="KEGG" id="sty:STY1271"/>
<dbReference type="PATRIC" id="fig|220341.7.peg.1276"/>
<dbReference type="eggNOG" id="COG0745">
    <property type="taxonomic scope" value="Bacteria"/>
</dbReference>
<dbReference type="HOGENOM" id="CLU_000445_30_1_6"/>
<dbReference type="OMA" id="YLFNERC"/>
<dbReference type="OrthoDB" id="9802426at2"/>
<dbReference type="PHI-base" id="PHI:9465"/>
<dbReference type="Proteomes" id="UP000000541">
    <property type="component" value="Chromosome"/>
</dbReference>
<dbReference type="Proteomes" id="UP000002670">
    <property type="component" value="Chromosome"/>
</dbReference>
<dbReference type="GO" id="GO:0005829">
    <property type="term" value="C:cytosol"/>
    <property type="evidence" value="ECO:0007669"/>
    <property type="project" value="TreeGrafter"/>
</dbReference>
<dbReference type="GO" id="GO:0032993">
    <property type="term" value="C:protein-DNA complex"/>
    <property type="evidence" value="ECO:0007669"/>
    <property type="project" value="TreeGrafter"/>
</dbReference>
<dbReference type="GO" id="GO:0000156">
    <property type="term" value="F:phosphorelay response regulator activity"/>
    <property type="evidence" value="ECO:0007669"/>
    <property type="project" value="TreeGrafter"/>
</dbReference>
<dbReference type="GO" id="GO:0000976">
    <property type="term" value="F:transcription cis-regulatory region binding"/>
    <property type="evidence" value="ECO:0007669"/>
    <property type="project" value="TreeGrafter"/>
</dbReference>
<dbReference type="GO" id="GO:0006355">
    <property type="term" value="P:regulation of DNA-templated transcription"/>
    <property type="evidence" value="ECO:0007669"/>
    <property type="project" value="InterPro"/>
</dbReference>
<dbReference type="CDD" id="cd19934">
    <property type="entry name" value="REC_OmpR_EcPhoP-like"/>
    <property type="match status" value="1"/>
</dbReference>
<dbReference type="CDD" id="cd00383">
    <property type="entry name" value="trans_reg_C"/>
    <property type="match status" value="1"/>
</dbReference>
<dbReference type="FunFam" id="3.40.50.2300:FF:000002">
    <property type="entry name" value="DNA-binding response regulator PhoP"/>
    <property type="match status" value="1"/>
</dbReference>
<dbReference type="FunFam" id="1.10.10.10:FF:000098">
    <property type="entry name" value="Two-component system response regulator PhoP"/>
    <property type="match status" value="1"/>
</dbReference>
<dbReference type="Gene3D" id="3.40.50.2300">
    <property type="match status" value="1"/>
</dbReference>
<dbReference type="Gene3D" id="6.10.250.690">
    <property type="match status" value="1"/>
</dbReference>
<dbReference type="Gene3D" id="1.10.10.10">
    <property type="entry name" value="Winged helix-like DNA-binding domain superfamily/Winged helix DNA-binding domain"/>
    <property type="match status" value="1"/>
</dbReference>
<dbReference type="InterPro" id="IPR011006">
    <property type="entry name" value="CheY-like_superfamily"/>
</dbReference>
<dbReference type="InterPro" id="IPR001867">
    <property type="entry name" value="OmpR/PhoB-type_DNA-bd"/>
</dbReference>
<dbReference type="InterPro" id="IPR001789">
    <property type="entry name" value="Sig_transdc_resp-reg_receiver"/>
</dbReference>
<dbReference type="InterPro" id="IPR039420">
    <property type="entry name" value="WalR-like"/>
</dbReference>
<dbReference type="InterPro" id="IPR036388">
    <property type="entry name" value="WH-like_DNA-bd_sf"/>
</dbReference>
<dbReference type="NCBIfam" id="NF008078">
    <property type="entry name" value="PRK10816.1"/>
    <property type="match status" value="1"/>
</dbReference>
<dbReference type="PANTHER" id="PTHR48111">
    <property type="entry name" value="REGULATOR OF RPOS"/>
    <property type="match status" value="1"/>
</dbReference>
<dbReference type="PANTHER" id="PTHR48111:SF71">
    <property type="entry name" value="TRANSCRIPTIONAL REGULATORY PROTEIN PHOP"/>
    <property type="match status" value="1"/>
</dbReference>
<dbReference type="Pfam" id="PF00072">
    <property type="entry name" value="Response_reg"/>
    <property type="match status" value="1"/>
</dbReference>
<dbReference type="Pfam" id="PF00486">
    <property type="entry name" value="Trans_reg_C"/>
    <property type="match status" value="1"/>
</dbReference>
<dbReference type="SMART" id="SM00448">
    <property type="entry name" value="REC"/>
    <property type="match status" value="1"/>
</dbReference>
<dbReference type="SMART" id="SM00862">
    <property type="entry name" value="Trans_reg_C"/>
    <property type="match status" value="1"/>
</dbReference>
<dbReference type="SUPFAM" id="SSF52172">
    <property type="entry name" value="CheY-like"/>
    <property type="match status" value="1"/>
</dbReference>
<dbReference type="PROSITE" id="PS51755">
    <property type="entry name" value="OMPR_PHOB"/>
    <property type="match status" value="1"/>
</dbReference>
<dbReference type="PROSITE" id="PS50110">
    <property type="entry name" value="RESPONSE_REGULATORY"/>
    <property type="match status" value="1"/>
</dbReference>
<evidence type="ECO:0000255" key="1">
    <source>
        <dbReference type="PROSITE-ProRule" id="PRU00169"/>
    </source>
</evidence>
<evidence type="ECO:0000255" key="2">
    <source>
        <dbReference type="PROSITE-ProRule" id="PRU01091"/>
    </source>
</evidence>
<evidence type="ECO:0000269" key="3">
    <source>
    </source>
</evidence>
<evidence type="ECO:0000269" key="4">
    <source>
    </source>
</evidence>
<evidence type="ECO:0000305" key="5"/>
<feature type="chain" id="PRO_0000081200" description="Virulence transcriptional regulatory protein PhoP">
    <location>
        <begin position="1"/>
        <end position="224"/>
    </location>
</feature>
<feature type="domain" description="Response regulatory" evidence="1">
    <location>
        <begin position="3"/>
        <end position="117"/>
    </location>
</feature>
<feature type="DNA-binding region" description="OmpR/PhoB-type" evidence="2">
    <location>
        <begin position="125"/>
        <end position="223"/>
    </location>
</feature>
<feature type="modified residue" description="4-aspartylphosphate" evidence="1">
    <location>
        <position position="52"/>
    </location>
</feature>
<name>PHOP_SALTI</name>
<organism>
    <name type="scientific">Salmonella typhi</name>
    <dbReference type="NCBI Taxonomy" id="90370"/>
    <lineage>
        <taxon>Bacteria</taxon>
        <taxon>Pseudomonadati</taxon>
        <taxon>Pseudomonadota</taxon>
        <taxon>Gammaproteobacteria</taxon>
        <taxon>Enterobacterales</taxon>
        <taxon>Enterobacteriaceae</taxon>
        <taxon>Salmonella</taxon>
    </lineage>
</organism>
<protein>
    <recommendedName>
        <fullName>Virulence transcriptional regulatory protein PhoP</fullName>
    </recommendedName>
</protein>
<accession>Q8Z7H2</accession>
<accession>Q7C9E6</accession>
<comment type="function">
    <text evidence="3 4">Member of the two-component regulatory system PhoQ/PhoP which regulates the expression of genes involved in virulence and resistance to host defense antimicrobial peptides. Promotes intramacrophage survival of S.typhi. Is required to enhance bacterial resistance to bile in the human intestinal cells.</text>
</comment>
<comment type="subcellular location">
    <subcellularLocation>
        <location evidence="5">Cytoplasm</location>
    </subcellularLocation>
</comment>
<comment type="PTM">
    <text evidence="5">Phosphorylated by PhoQ.</text>
</comment>
<keyword id="KW-0010">Activator</keyword>
<keyword id="KW-0963">Cytoplasm</keyword>
<keyword id="KW-0238">DNA-binding</keyword>
<keyword id="KW-0341">Growth regulation</keyword>
<keyword id="KW-0597">Phosphoprotein</keyword>
<keyword id="KW-0678">Repressor</keyword>
<keyword id="KW-0804">Transcription</keyword>
<keyword id="KW-0805">Transcription regulation</keyword>
<keyword id="KW-0902">Two-component regulatory system</keyword>
<keyword id="KW-0843">Virulence</keyword>
<gene>
    <name type="primary">phoP</name>
    <name type="ordered locus">STY1271</name>
    <name type="ordered locus">t1689</name>
</gene>
<reference key="1">
    <citation type="journal article" date="2001" name="Nature">
        <title>Complete genome sequence of a multiple drug resistant Salmonella enterica serovar Typhi CT18.</title>
        <authorList>
            <person name="Parkhill J."/>
            <person name="Dougan G."/>
            <person name="James K.D."/>
            <person name="Thomson N.R."/>
            <person name="Pickard D."/>
            <person name="Wain J."/>
            <person name="Churcher C.M."/>
            <person name="Mungall K.L."/>
            <person name="Bentley S.D."/>
            <person name="Holden M.T.G."/>
            <person name="Sebaihia M."/>
            <person name="Baker S."/>
            <person name="Basham D."/>
            <person name="Brooks K."/>
            <person name="Chillingworth T."/>
            <person name="Connerton P."/>
            <person name="Cronin A."/>
            <person name="Davis P."/>
            <person name="Davies R.M."/>
            <person name="Dowd L."/>
            <person name="White N."/>
            <person name="Farrar J."/>
            <person name="Feltwell T."/>
            <person name="Hamlin N."/>
            <person name="Haque A."/>
            <person name="Hien T.T."/>
            <person name="Holroyd S."/>
            <person name="Jagels K."/>
            <person name="Krogh A."/>
            <person name="Larsen T.S."/>
            <person name="Leather S."/>
            <person name="Moule S."/>
            <person name="O'Gaora P."/>
            <person name="Parry C."/>
            <person name="Quail M.A."/>
            <person name="Rutherford K.M."/>
            <person name="Simmonds M."/>
            <person name="Skelton J."/>
            <person name="Stevens K."/>
            <person name="Whitehead S."/>
            <person name="Barrell B.G."/>
        </authorList>
    </citation>
    <scope>NUCLEOTIDE SEQUENCE [LARGE SCALE GENOMIC DNA]</scope>
    <source>
        <strain>CT18</strain>
    </source>
</reference>
<reference key="2">
    <citation type="journal article" date="2003" name="J. Bacteriol.">
        <title>Comparative genomics of Salmonella enterica serovar Typhi strains Ty2 and CT18.</title>
        <authorList>
            <person name="Deng W."/>
            <person name="Liou S.-R."/>
            <person name="Plunkett G. III"/>
            <person name="Mayhew G.F."/>
            <person name="Rose D.J."/>
            <person name="Burland V."/>
            <person name="Kodoyianni V."/>
            <person name="Schwartz D.C."/>
            <person name="Blattner F.R."/>
        </authorList>
    </citation>
    <scope>NUCLEOTIDE SEQUENCE [LARGE SCALE GENOMIC DNA]</scope>
    <source>
        <strain>ATCC 700931 / Ty2</strain>
    </source>
</reference>
<reference key="3">
    <citation type="journal article" date="1999" name="Infect. Immun.">
        <title>PhoP-PhoQ-regulated loci are required for enhanced bile resistance in Salmonella spp.</title>
        <authorList>
            <person name="van Velkinburgh J.C."/>
            <person name="Gunn J.S."/>
        </authorList>
    </citation>
    <scope>FUNCTION</scope>
    <source>
        <strain>ATCC 700931 / Ty2</strain>
    </source>
</reference>
<reference key="4">
    <citation type="journal article" date="1999" name="Microbiology">
        <title>The Salmonella typhi melittin resistance gene pqaB affects intracellular growth in PMA-differentiated U937 cells, polymyxin B resistance and lipopolysaccharide.</title>
        <authorList>
            <person name="Baker S.J."/>
            <person name="Gunn J.S."/>
            <person name="Morona R."/>
        </authorList>
    </citation>
    <scope>FUNCTION</scope>
    <source>
        <strain>ATCC 700931 / Ty2</strain>
    </source>
</reference>